<feature type="chain" id="PRO_0000377637" description="Phosphatidylinositol N-acetylglucosaminyltransferase GPI3 subunit">
    <location>
        <begin position="1"/>
        <end position="452"/>
    </location>
</feature>
<feature type="transmembrane region" description="Helical" evidence="2">
    <location>
        <begin position="407"/>
        <end position="427"/>
    </location>
</feature>
<accession>B3LKQ3</accession>
<protein>
    <recommendedName>
        <fullName>Phosphatidylinositol N-acetylglucosaminyltransferase GPI3 subunit</fullName>
        <ecNumber>2.4.1.198</ecNumber>
    </recommendedName>
    <alternativeName>
        <fullName>GlcNAc-PI synthesis protein</fullName>
    </alternativeName>
</protein>
<reference key="1">
    <citation type="submission" date="2005-03" db="EMBL/GenBank/DDBJ databases">
        <title>Annotation of the Saccharomyces cerevisiae RM11-1a genome.</title>
        <authorList>
            <consortium name="The Broad Institute Genome Sequencing Platform"/>
            <person name="Birren B.W."/>
            <person name="Lander E.S."/>
            <person name="Galagan J.E."/>
            <person name="Nusbaum C."/>
            <person name="Devon K."/>
            <person name="Cuomo C."/>
            <person name="Jaffe D.B."/>
            <person name="Butler J."/>
            <person name="Alvarez P."/>
            <person name="Gnerre S."/>
            <person name="Grabherr M."/>
            <person name="Kleber M."/>
            <person name="Mauceli E.W."/>
            <person name="Brockman W."/>
            <person name="MacCallum I.A."/>
            <person name="Rounsley S."/>
            <person name="Young S.K."/>
            <person name="LaButti K."/>
            <person name="Pushparaj V."/>
            <person name="DeCaprio D."/>
            <person name="Crawford M."/>
            <person name="Koehrsen M."/>
            <person name="Engels R."/>
            <person name="Montgomery P."/>
            <person name="Pearson M."/>
            <person name="Howarth C."/>
            <person name="Larson L."/>
            <person name="Luoma S."/>
            <person name="White J."/>
            <person name="O'Leary S."/>
            <person name="Kodira C.D."/>
            <person name="Zeng Q."/>
            <person name="Yandava C."/>
            <person name="Alvarado L."/>
            <person name="Pratt S."/>
            <person name="Kruglyak L."/>
        </authorList>
    </citation>
    <scope>NUCLEOTIDE SEQUENCE [LARGE SCALE GENOMIC DNA]</scope>
    <source>
        <strain>RM11-1a</strain>
    </source>
</reference>
<proteinExistence type="inferred from homology"/>
<comment type="function">
    <text evidence="1">Catalytic subunit in the complex catalyzing the transfer of N-acetylglucosamine from UDP-N-acetylglucosamine to phosphatidylinositol, the first step of GPI biosynthesis.</text>
</comment>
<comment type="catalytic activity">
    <reaction>
        <text>a 1,2-diacyl-sn-glycero-3-phospho-(1D-myo-inositol) + UDP-N-acetyl-alpha-D-glucosamine = a 6-(N-acetyl-alpha-D-glucosaminyl)-1-(1,2-diacyl-sn-glycero-3-phospho)-1D-myo-inositol + UDP + H(+)</text>
        <dbReference type="Rhea" id="RHEA:14789"/>
        <dbReference type="ChEBI" id="CHEBI:15378"/>
        <dbReference type="ChEBI" id="CHEBI:57265"/>
        <dbReference type="ChEBI" id="CHEBI:57705"/>
        <dbReference type="ChEBI" id="CHEBI:57880"/>
        <dbReference type="ChEBI" id="CHEBI:58223"/>
        <dbReference type="EC" id="2.4.1.198"/>
    </reaction>
</comment>
<comment type="activity regulation">
    <text evidence="1">Inhibited by Ras, probably via the interaction between RAS2 and ERI1.</text>
</comment>
<comment type="pathway">
    <text>Glycolipid biosynthesis; glycosylphosphatidylinositol-anchor biosynthesis.</text>
</comment>
<comment type="subunit">
    <text evidence="1">Component of the phosphatidylinositol N-acetylglucosaminyltransferase complex composed of at least GPI1, GPI2, GPI3, GPI15, GPI19 and ERI1.</text>
</comment>
<comment type="subcellular location">
    <subcellularLocation>
        <location evidence="1">Endoplasmic reticulum membrane</location>
        <topology evidence="1">Single-pass membrane protein</topology>
    </subcellularLocation>
</comment>
<comment type="similarity">
    <text evidence="3">Belongs to the glycosyltransferase group 1 family.</text>
</comment>
<gene>
    <name type="primary">SPT14</name>
    <name type="ORF">SCRG_02322</name>
</gene>
<evidence type="ECO:0000250" key="1"/>
<evidence type="ECO:0000255" key="2"/>
<evidence type="ECO:0000305" key="3"/>
<organism>
    <name type="scientific">Saccharomyces cerevisiae (strain RM11-1a)</name>
    <name type="common">Baker's yeast</name>
    <dbReference type="NCBI Taxonomy" id="285006"/>
    <lineage>
        <taxon>Eukaryota</taxon>
        <taxon>Fungi</taxon>
        <taxon>Dikarya</taxon>
        <taxon>Ascomycota</taxon>
        <taxon>Saccharomycotina</taxon>
        <taxon>Saccharomycetes</taxon>
        <taxon>Saccharomycetales</taxon>
        <taxon>Saccharomycetaceae</taxon>
        <taxon>Saccharomyces</taxon>
    </lineage>
</organism>
<keyword id="KW-0256">Endoplasmic reticulum</keyword>
<keyword id="KW-0328">Glycosyltransferase</keyword>
<keyword id="KW-0337">GPI-anchor biosynthesis</keyword>
<keyword id="KW-0472">Membrane</keyword>
<keyword id="KW-0808">Transferase</keyword>
<keyword id="KW-0812">Transmembrane</keyword>
<keyword id="KW-1133">Transmembrane helix</keyword>
<dbReference type="EC" id="2.4.1.198"/>
<dbReference type="EMBL" id="CH408046">
    <property type="protein sequence ID" value="EDV11051.1"/>
    <property type="molecule type" value="Genomic_DNA"/>
</dbReference>
<dbReference type="SMR" id="B3LKQ3"/>
<dbReference type="HOGENOM" id="CLU_009583_19_0_1"/>
<dbReference type="OrthoDB" id="33573at4893"/>
<dbReference type="UniPathway" id="UPA00196"/>
<dbReference type="Proteomes" id="UP000008335">
    <property type="component" value="Unassembled WGS sequence"/>
</dbReference>
<dbReference type="GO" id="GO:0000506">
    <property type="term" value="C:glycosylphosphatidylinositol-N-acetylglucosaminyltransferase (GPI-GnT) complex"/>
    <property type="evidence" value="ECO:0007669"/>
    <property type="project" value="InterPro"/>
</dbReference>
<dbReference type="GO" id="GO:0017176">
    <property type="term" value="F:phosphatidylinositol N-acetylglucosaminyltransferase activity"/>
    <property type="evidence" value="ECO:0007669"/>
    <property type="project" value="UniProtKB-EC"/>
</dbReference>
<dbReference type="GO" id="GO:0006506">
    <property type="term" value="P:GPI anchor biosynthetic process"/>
    <property type="evidence" value="ECO:0007669"/>
    <property type="project" value="UniProtKB-UniPathway"/>
</dbReference>
<dbReference type="CDD" id="cd03796">
    <property type="entry name" value="GT4_PIG-A-like"/>
    <property type="match status" value="1"/>
</dbReference>
<dbReference type="FunFam" id="3.40.50.2000:FF:000276">
    <property type="entry name" value="Phosphatidylinositol N-acetylglucosaminyltransferase GPI3 subunit"/>
    <property type="match status" value="1"/>
</dbReference>
<dbReference type="FunFam" id="3.40.50.2000:FF:000026">
    <property type="entry name" value="Phosphatidylinositol N-acetylglucosaminyltransferase subunit A"/>
    <property type="match status" value="1"/>
</dbReference>
<dbReference type="Gene3D" id="3.40.50.2000">
    <property type="entry name" value="Glycogen Phosphorylase B"/>
    <property type="match status" value="2"/>
</dbReference>
<dbReference type="InterPro" id="IPR001296">
    <property type="entry name" value="Glyco_trans_1"/>
</dbReference>
<dbReference type="InterPro" id="IPR039507">
    <property type="entry name" value="PIG-A/GPI3"/>
</dbReference>
<dbReference type="InterPro" id="IPR013234">
    <property type="entry name" value="PIGA_GPI_anchor_biosynthesis"/>
</dbReference>
<dbReference type="PANTHER" id="PTHR45871">
    <property type="entry name" value="N-ACETYLGLUCOSAMINYL-PHOSPHATIDYLINOSITOL BIOSYNTHETIC PROTEIN"/>
    <property type="match status" value="1"/>
</dbReference>
<dbReference type="PANTHER" id="PTHR45871:SF1">
    <property type="entry name" value="PHOSPHATIDYLINOSITOL N-ACETYLGLUCOSAMINYLTRANSFERASE SUBUNIT A"/>
    <property type="match status" value="1"/>
</dbReference>
<dbReference type="Pfam" id="PF00534">
    <property type="entry name" value="Glycos_transf_1"/>
    <property type="match status" value="1"/>
</dbReference>
<dbReference type="Pfam" id="PF08288">
    <property type="entry name" value="PIGA"/>
    <property type="match status" value="1"/>
</dbReference>
<dbReference type="SUPFAM" id="SSF53756">
    <property type="entry name" value="UDP-Glycosyltransferase/glycogen phosphorylase"/>
    <property type="match status" value="1"/>
</dbReference>
<sequence>MGFNIAMLCDFFYPQLGGVEFHIYHLSQKLIDLGHSVVIITHAYKDRVGVRHLTNGLKVYHVPFFVIFRETTFPTVFSTFPIIRNILLREQIQIVHSHGSASTFAHEGILHANTMGLRTVFTDHSLYGFNNLTSIWVNKLLTFTLTNIDRVICVSNTCKENMIVRTELSPDIISVIPNAVVSEDFKPRDPTGGTKRKQSRDKIVIVVIGRLFPNKGSDLLTRIIPKVCSSHEDVEFIVAGDGPKFIDFQQMIESHRLQKRVQLLGSVPHEKVRDVLCQGDIYLHASLTEAFGTILVEAASCNLLIVTTQVGGIPEVLPNEMTVYAEQTSVSDLVQATNKAINIIRSKALDTSSFHDSVSKMYDWMDVAKRTVEIYTNISSTSSADDKDWMKMVANLYKRDGIWAKHLYLLCGIVEYMLFFLLEWLYPRDEIDLAPKWPKKTVSNETKEARET</sequence>
<name>GPI3_YEAS1</name>